<sequence length="887" mass="95737">MTDQADTSERKPKAAGKTLSLKRTVESGHVRQNFSHGRSKSVVVEKKKKRTLKTSADAAPAAAPAAAPAAAEEVAKKPVAAPEVKPAAPVEERPAPVAKAAPEVKAVPAPAPAAAPAVEKKPSRSRSGVVLRTLTEEEKNARAQALDSAREREGEDRRRAEEEARRFAEEDARREAERAAAAARAAEEASRHTADQSTRTRAAEEAKRRLDDDRPAATPAAARPAKEQAIEEDDDKPKRGAGHTPAKAPPARRSEERRRGKLTITKAFDDESERQRSLASMRRRVERERKKHMGIQEAPQKIIREVVIPEVITIQELANRMAERAVDVMKILMKQGIMLKITDVIDSDTAQLVAEELGHTVKRVAESDVEEGLVGEADIEEAKQARAPVVTVMGHVDHGKTSLLDALRKTDVAAGEAGGITQHIGAYQVNLSSGERITFLDTPGHAAFTSMRARGAKVTDIVVLVVAADDGVMPQTIEAINHAKAAGVPMIVAINKMDKPEADPTRVKNELLQHEVVVEDFGGDVLTVPISAKTGMGLDKLEETILLQAELLDIRANPDRAAEGIIVEAKLDRGRGPVGTVLVQRGTLKVGDIIVAGAEWGRVRALINDRGENVESAGPSVPVEVLGLGGAPEAGDVISVVESEGRAREVTAYRQRLQRDKRVGTGGRTSLDQMLSQLKEQDKKELPIVVKADVQGSAEAIVQALEKLGTDEVTARVLHVGVGGVTESDVTLATASRAPIIGFNVRANTQARDAARQAGVEIRYYSVIYDLVDDIKAAMSGMLSPELRETFLGNAEILEIFNISKTGKVAGCRVTEGVVRRGSHVRLIRDDVVIHEGKLSTLKRFKDEVKEVQSGQECGMAFEGYQDMRKGDVIECFDVEVVQRSLA</sequence>
<proteinExistence type="inferred from homology"/>
<dbReference type="EMBL" id="CP000774">
    <property type="protein sequence ID" value="ABS65226.1"/>
    <property type="molecule type" value="Genomic_DNA"/>
</dbReference>
<dbReference type="RefSeq" id="WP_012112487.1">
    <property type="nucleotide sequence ID" value="NC_009719.1"/>
</dbReference>
<dbReference type="SMR" id="A7HZ93"/>
<dbReference type="STRING" id="402881.Plav_3628"/>
<dbReference type="KEGG" id="pla:Plav_3628"/>
<dbReference type="eggNOG" id="COG0532">
    <property type="taxonomic scope" value="Bacteria"/>
</dbReference>
<dbReference type="HOGENOM" id="CLU_006301_10_1_5"/>
<dbReference type="OrthoDB" id="9811804at2"/>
<dbReference type="Proteomes" id="UP000006377">
    <property type="component" value="Chromosome"/>
</dbReference>
<dbReference type="GO" id="GO:0005829">
    <property type="term" value="C:cytosol"/>
    <property type="evidence" value="ECO:0007669"/>
    <property type="project" value="TreeGrafter"/>
</dbReference>
<dbReference type="GO" id="GO:0005525">
    <property type="term" value="F:GTP binding"/>
    <property type="evidence" value="ECO:0007669"/>
    <property type="project" value="UniProtKB-KW"/>
</dbReference>
<dbReference type="GO" id="GO:0003924">
    <property type="term" value="F:GTPase activity"/>
    <property type="evidence" value="ECO:0007669"/>
    <property type="project" value="UniProtKB-UniRule"/>
</dbReference>
<dbReference type="GO" id="GO:0097216">
    <property type="term" value="F:guanosine tetraphosphate binding"/>
    <property type="evidence" value="ECO:0007669"/>
    <property type="project" value="UniProtKB-ARBA"/>
</dbReference>
<dbReference type="GO" id="GO:0003743">
    <property type="term" value="F:translation initiation factor activity"/>
    <property type="evidence" value="ECO:0007669"/>
    <property type="project" value="UniProtKB-UniRule"/>
</dbReference>
<dbReference type="CDD" id="cd01887">
    <property type="entry name" value="IF2_eIF5B"/>
    <property type="match status" value="1"/>
</dbReference>
<dbReference type="CDD" id="cd03702">
    <property type="entry name" value="IF2_mtIF2_II"/>
    <property type="match status" value="1"/>
</dbReference>
<dbReference type="CDD" id="cd03692">
    <property type="entry name" value="mtIF2_IVc"/>
    <property type="match status" value="1"/>
</dbReference>
<dbReference type="FunFam" id="2.40.30.10:FF:000007">
    <property type="entry name" value="Translation initiation factor IF-2"/>
    <property type="match status" value="1"/>
</dbReference>
<dbReference type="FunFam" id="2.40.30.10:FF:000008">
    <property type="entry name" value="Translation initiation factor IF-2"/>
    <property type="match status" value="1"/>
</dbReference>
<dbReference type="FunFam" id="3.40.50.10050:FF:000001">
    <property type="entry name" value="Translation initiation factor IF-2"/>
    <property type="match status" value="1"/>
</dbReference>
<dbReference type="FunFam" id="3.40.50.300:FF:000019">
    <property type="entry name" value="Translation initiation factor IF-2"/>
    <property type="match status" value="1"/>
</dbReference>
<dbReference type="Gene3D" id="3.40.50.300">
    <property type="entry name" value="P-loop containing nucleotide triphosphate hydrolases"/>
    <property type="match status" value="1"/>
</dbReference>
<dbReference type="Gene3D" id="2.40.30.10">
    <property type="entry name" value="Translation factors"/>
    <property type="match status" value="2"/>
</dbReference>
<dbReference type="Gene3D" id="3.40.50.10050">
    <property type="entry name" value="Translation initiation factor IF- 2, domain 3"/>
    <property type="match status" value="1"/>
</dbReference>
<dbReference type="HAMAP" id="MF_00100_B">
    <property type="entry name" value="IF_2_B"/>
    <property type="match status" value="1"/>
</dbReference>
<dbReference type="InterPro" id="IPR053905">
    <property type="entry name" value="EF-G-like_DII"/>
</dbReference>
<dbReference type="InterPro" id="IPR004161">
    <property type="entry name" value="EFTu-like_2"/>
</dbReference>
<dbReference type="InterPro" id="IPR013575">
    <property type="entry name" value="IF2_assoc_dom_bac"/>
</dbReference>
<dbReference type="InterPro" id="IPR044145">
    <property type="entry name" value="IF2_II"/>
</dbReference>
<dbReference type="InterPro" id="IPR006847">
    <property type="entry name" value="IF2_N"/>
</dbReference>
<dbReference type="InterPro" id="IPR027417">
    <property type="entry name" value="P-loop_NTPase"/>
</dbReference>
<dbReference type="InterPro" id="IPR005225">
    <property type="entry name" value="Small_GTP-bd"/>
</dbReference>
<dbReference type="InterPro" id="IPR000795">
    <property type="entry name" value="T_Tr_GTP-bd_dom"/>
</dbReference>
<dbReference type="InterPro" id="IPR000178">
    <property type="entry name" value="TF_IF2_bacterial-like"/>
</dbReference>
<dbReference type="InterPro" id="IPR015760">
    <property type="entry name" value="TIF_IF2"/>
</dbReference>
<dbReference type="InterPro" id="IPR023115">
    <property type="entry name" value="TIF_IF2_dom3"/>
</dbReference>
<dbReference type="InterPro" id="IPR036925">
    <property type="entry name" value="TIF_IF2_dom3_sf"/>
</dbReference>
<dbReference type="InterPro" id="IPR009000">
    <property type="entry name" value="Transl_B-barrel_sf"/>
</dbReference>
<dbReference type="NCBIfam" id="TIGR00487">
    <property type="entry name" value="IF-2"/>
    <property type="match status" value="1"/>
</dbReference>
<dbReference type="NCBIfam" id="TIGR00231">
    <property type="entry name" value="small_GTP"/>
    <property type="match status" value="1"/>
</dbReference>
<dbReference type="PANTHER" id="PTHR43381:SF5">
    <property type="entry name" value="TR-TYPE G DOMAIN-CONTAINING PROTEIN"/>
    <property type="match status" value="1"/>
</dbReference>
<dbReference type="PANTHER" id="PTHR43381">
    <property type="entry name" value="TRANSLATION INITIATION FACTOR IF-2-RELATED"/>
    <property type="match status" value="1"/>
</dbReference>
<dbReference type="Pfam" id="PF22042">
    <property type="entry name" value="EF-G_D2"/>
    <property type="match status" value="1"/>
</dbReference>
<dbReference type="Pfam" id="PF00009">
    <property type="entry name" value="GTP_EFTU"/>
    <property type="match status" value="1"/>
</dbReference>
<dbReference type="Pfam" id="PF03144">
    <property type="entry name" value="GTP_EFTU_D2"/>
    <property type="match status" value="1"/>
</dbReference>
<dbReference type="Pfam" id="PF11987">
    <property type="entry name" value="IF-2"/>
    <property type="match status" value="1"/>
</dbReference>
<dbReference type="Pfam" id="PF08364">
    <property type="entry name" value="IF2_assoc"/>
    <property type="match status" value="1"/>
</dbReference>
<dbReference type="Pfam" id="PF04760">
    <property type="entry name" value="IF2_N"/>
    <property type="match status" value="1"/>
</dbReference>
<dbReference type="SUPFAM" id="SSF52156">
    <property type="entry name" value="Initiation factor IF2/eIF5b, domain 3"/>
    <property type="match status" value="1"/>
</dbReference>
<dbReference type="SUPFAM" id="SSF52540">
    <property type="entry name" value="P-loop containing nucleoside triphosphate hydrolases"/>
    <property type="match status" value="1"/>
</dbReference>
<dbReference type="SUPFAM" id="SSF50447">
    <property type="entry name" value="Translation proteins"/>
    <property type="match status" value="2"/>
</dbReference>
<dbReference type="PROSITE" id="PS51722">
    <property type="entry name" value="G_TR_2"/>
    <property type="match status" value="1"/>
</dbReference>
<dbReference type="PROSITE" id="PS01176">
    <property type="entry name" value="IF2"/>
    <property type="match status" value="1"/>
</dbReference>
<evidence type="ECO:0000250" key="1"/>
<evidence type="ECO:0000255" key="2">
    <source>
        <dbReference type="HAMAP-Rule" id="MF_00100"/>
    </source>
</evidence>
<evidence type="ECO:0000256" key="3">
    <source>
        <dbReference type="SAM" id="MobiDB-lite"/>
    </source>
</evidence>
<feature type="chain" id="PRO_0000335496" description="Translation initiation factor IF-2">
    <location>
        <begin position="1"/>
        <end position="887"/>
    </location>
</feature>
<feature type="domain" description="tr-type G">
    <location>
        <begin position="385"/>
        <end position="553"/>
    </location>
</feature>
<feature type="region of interest" description="Disordered" evidence="3">
    <location>
        <begin position="1"/>
        <end position="291"/>
    </location>
</feature>
<feature type="region of interest" description="G1" evidence="1">
    <location>
        <begin position="394"/>
        <end position="401"/>
    </location>
</feature>
<feature type="region of interest" description="G2" evidence="1">
    <location>
        <begin position="419"/>
        <end position="423"/>
    </location>
</feature>
<feature type="region of interest" description="G3" evidence="1">
    <location>
        <begin position="441"/>
        <end position="444"/>
    </location>
</feature>
<feature type="region of interest" description="G4" evidence="1">
    <location>
        <begin position="495"/>
        <end position="498"/>
    </location>
</feature>
<feature type="region of interest" description="G5" evidence="1">
    <location>
        <begin position="531"/>
        <end position="533"/>
    </location>
</feature>
<feature type="compositionally biased region" description="Low complexity" evidence="3">
    <location>
        <begin position="58"/>
        <end position="117"/>
    </location>
</feature>
<feature type="compositionally biased region" description="Basic and acidic residues" evidence="3">
    <location>
        <begin position="148"/>
        <end position="178"/>
    </location>
</feature>
<feature type="compositionally biased region" description="Basic and acidic residues" evidence="3">
    <location>
        <begin position="185"/>
        <end position="194"/>
    </location>
</feature>
<feature type="compositionally biased region" description="Basic and acidic residues" evidence="3">
    <location>
        <begin position="201"/>
        <end position="215"/>
    </location>
</feature>
<feature type="compositionally biased region" description="Basic and acidic residues" evidence="3">
    <location>
        <begin position="267"/>
        <end position="276"/>
    </location>
</feature>
<feature type="binding site" evidence="2">
    <location>
        <begin position="394"/>
        <end position="401"/>
    </location>
    <ligand>
        <name>GTP</name>
        <dbReference type="ChEBI" id="CHEBI:37565"/>
    </ligand>
</feature>
<feature type="binding site" evidence="2">
    <location>
        <begin position="441"/>
        <end position="445"/>
    </location>
    <ligand>
        <name>GTP</name>
        <dbReference type="ChEBI" id="CHEBI:37565"/>
    </ligand>
</feature>
<feature type="binding site" evidence="2">
    <location>
        <begin position="495"/>
        <end position="498"/>
    </location>
    <ligand>
        <name>GTP</name>
        <dbReference type="ChEBI" id="CHEBI:37565"/>
    </ligand>
</feature>
<protein>
    <recommendedName>
        <fullName evidence="2">Translation initiation factor IF-2</fullName>
    </recommendedName>
</protein>
<accession>A7HZ93</accession>
<comment type="function">
    <text evidence="2">One of the essential components for the initiation of protein synthesis. Protects formylmethionyl-tRNA from spontaneous hydrolysis and promotes its binding to the 30S ribosomal subunits. Also involved in the hydrolysis of GTP during the formation of the 70S ribosomal complex.</text>
</comment>
<comment type="subcellular location">
    <subcellularLocation>
        <location evidence="2">Cytoplasm</location>
    </subcellularLocation>
</comment>
<comment type="similarity">
    <text evidence="2">Belongs to the TRAFAC class translation factor GTPase superfamily. Classic translation factor GTPase family. IF-2 subfamily.</text>
</comment>
<keyword id="KW-0963">Cytoplasm</keyword>
<keyword id="KW-0342">GTP-binding</keyword>
<keyword id="KW-0396">Initiation factor</keyword>
<keyword id="KW-0547">Nucleotide-binding</keyword>
<keyword id="KW-0648">Protein biosynthesis</keyword>
<keyword id="KW-1185">Reference proteome</keyword>
<reference key="1">
    <citation type="journal article" date="2011" name="Stand. Genomic Sci.">
        <title>Complete genome sequence of Parvibaculum lavamentivorans type strain (DS-1(T)).</title>
        <authorList>
            <person name="Schleheck D."/>
            <person name="Weiss M."/>
            <person name="Pitluck S."/>
            <person name="Bruce D."/>
            <person name="Land M.L."/>
            <person name="Han S."/>
            <person name="Saunders E."/>
            <person name="Tapia R."/>
            <person name="Detter C."/>
            <person name="Brettin T."/>
            <person name="Han J."/>
            <person name="Woyke T."/>
            <person name="Goodwin L."/>
            <person name="Pennacchio L."/>
            <person name="Nolan M."/>
            <person name="Cook A.M."/>
            <person name="Kjelleberg S."/>
            <person name="Thomas T."/>
        </authorList>
    </citation>
    <scope>NUCLEOTIDE SEQUENCE [LARGE SCALE GENOMIC DNA]</scope>
    <source>
        <strain>DS-1 / DSM 13023 / NCIMB 13966</strain>
    </source>
</reference>
<organism>
    <name type="scientific">Parvibaculum lavamentivorans (strain DS-1 / DSM 13023 / NCIMB 13966)</name>
    <dbReference type="NCBI Taxonomy" id="402881"/>
    <lineage>
        <taxon>Bacteria</taxon>
        <taxon>Pseudomonadati</taxon>
        <taxon>Pseudomonadota</taxon>
        <taxon>Alphaproteobacteria</taxon>
        <taxon>Hyphomicrobiales</taxon>
        <taxon>Parvibaculaceae</taxon>
        <taxon>Parvibaculum</taxon>
    </lineage>
</organism>
<gene>
    <name evidence="2" type="primary">infB</name>
    <name type="ordered locus">Plav_3628</name>
</gene>
<name>IF2_PARL1</name>